<sequence length="337" mass="36724">MVNVGINGFGRIGRIVFRNALLNPKIQVVAINDPFINLEYMVYMFKYDSVHGRFKGTVEAKDGKLWIQGKPVIVYGEKNPSDIKWGAAGRDYVVESTGVFTTVEKAEGHLKGGAKKVIISAPSADAPMFVMGCNLDQYDPKYTVISNASCTTNCLAPLTKVIHDKYGIIEGLMSTIHATTATQKTVDGPSNKDWRGGRAVVNNIIPSSTGAAKAVGKVIPSLNGKLTGLSFRVPTIDVSVIDLVVRLEKPASYEDIKKTVKEASEGAYKGIIEYTEEQVVSADFIGHHASSIFDAQAGIQLNPNFVKLIVWYDNEWGYSARVCDLLVFAAEQDAKQQ</sequence>
<evidence type="ECO:0000250" key="1"/>
<evidence type="ECO:0000255" key="2">
    <source>
        <dbReference type="PROSITE-ProRule" id="PRU10009"/>
    </source>
</evidence>
<evidence type="ECO:0000305" key="3"/>
<reference key="1">
    <citation type="journal article" date="1999" name="Mycoscience">
        <title>Cloning and sequence analysis of the glyceraldehyde-3-phosphate dehydrogenase gene from the ectomycorrhizal basidiomycete Lyophyllum shimeji.</title>
        <authorList>
            <person name="Saito T."/>
            <person name="Tanaka N."/>
        </authorList>
    </citation>
    <scope>NUCLEOTIDE SEQUENCE [GENOMIC DNA]</scope>
</reference>
<protein>
    <recommendedName>
        <fullName>Glyceraldehyde-3-phosphate dehydrogenase</fullName>
        <shortName>GAPDH</shortName>
        <ecNumber>1.2.1.12</ecNumber>
    </recommendedName>
</protein>
<dbReference type="EC" id="1.2.1.12"/>
<dbReference type="EMBL" id="D88426">
    <property type="protein sequence ID" value="BAA13611.1"/>
    <property type="molecule type" value="Genomic_DNA"/>
</dbReference>
<dbReference type="SMR" id="Q92243"/>
<dbReference type="UniPathway" id="UPA00109">
    <property type="reaction ID" value="UER00184"/>
</dbReference>
<dbReference type="GO" id="GO:0005829">
    <property type="term" value="C:cytosol"/>
    <property type="evidence" value="ECO:0007669"/>
    <property type="project" value="TreeGrafter"/>
</dbReference>
<dbReference type="GO" id="GO:0004365">
    <property type="term" value="F:glyceraldehyde-3-phosphate dehydrogenase (NAD+) (phosphorylating) activity"/>
    <property type="evidence" value="ECO:0007669"/>
    <property type="project" value="UniProtKB-EC"/>
</dbReference>
<dbReference type="GO" id="GO:0051287">
    <property type="term" value="F:NAD binding"/>
    <property type="evidence" value="ECO:0007669"/>
    <property type="project" value="InterPro"/>
</dbReference>
<dbReference type="GO" id="GO:0050661">
    <property type="term" value="F:NADP binding"/>
    <property type="evidence" value="ECO:0007669"/>
    <property type="project" value="InterPro"/>
</dbReference>
<dbReference type="GO" id="GO:0006006">
    <property type="term" value="P:glucose metabolic process"/>
    <property type="evidence" value="ECO:0007669"/>
    <property type="project" value="InterPro"/>
</dbReference>
<dbReference type="GO" id="GO:0006096">
    <property type="term" value="P:glycolytic process"/>
    <property type="evidence" value="ECO:0007669"/>
    <property type="project" value="UniProtKB-UniPathway"/>
</dbReference>
<dbReference type="CDD" id="cd18126">
    <property type="entry name" value="GAPDH_I_C"/>
    <property type="match status" value="1"/>
</dbReference>
<dbReference type="CDD" id="cd05214">
    <property type="entry name" value="GAPDH_I_N"/>
    <property type="match status" value="1"/>
</dbReference>
<dbReference type="FunFam" id="3.30.360.10:FF:000001">
    <property type="entry name" value="Glyceraldehyde-3-phosphate dehydrogenase"/>
    <property type="match status" value="1"/>
</dbReference>
<dbReference type="FunFam" id="3.40.50.720:FF:000266">
    <property type="entry name" value="Glyceraldehyde-3-phosphate dehydrogenase"/>
    <property type="match status" value="1"/>
</dbReference>
<dbReference type="Gene3D" id="3.30.360.10">
    <property type="entry name" value="Dihydrodipicolinate Reductase, domain 2"/>
    <property type="match status" value="1"/>
</dbReference>
<dbReference type="Gene3D" id="3.40.50.720">
    <property type="entry name" value="NAD(P)-binding Rossmann-like Domain"/>
    <property type="match status" value="1"/>
</dbReference>
<dbReference type="InterPro" id="IPR020831">
    <property type="entry name" value="GlycerAld/Erythrose_P_DH"/>
</dbReference>
<dbReference type="InterPro" id="IPR020830">
    <property type="entry name" value="GlycerAld_3-P_DH_AS"/>
</dbReference>
<dbReference type="InterPro" id="IPR020829">
    <property type="entry name" value="GlycerAld_3-P_DH_cat"/>
</dbReference>
<dbReference type="InterPro" id="IPR020828">
    <property type="entry name" value="GlycerAld_3-P_DH_NAD(P)-bd"/>
</dbReference>
<dbReference type="InterPro" id="IPR006424">
    <property type="entry name" value="Glyceraldehyde-3-P_DH_1"/>
</dbReference>
<dbReference type="InterPro" id="IPR036291">
    <property type="entry name" value="NAD(P)-bd_dom_sf"/>
</dbReference>
<dbReference type="NCBIfam" id="TIGR01534">
    <property type="entry name" value="GAPDH-I"/>
    <property type="match status" value="1"/>
</dbReference>
<dbReference type="PANTHER" id="PTHR10836">
    <property type="entry name" value="GLYCERALDEHYDE 3-PHOSPHATE DEHYDROGENASE"/>
    <property type="match status" value="1"/>
</dbReference>
<dbReference type="PANTHER" id="PTHR10836:SF76">
    <property type="entry name" value="GLYCERALDEHYDE-3-PHOSPHATE DEHYDROGENASE-RELATED"/>
    <property type="match status" value="1"/>
</dbReference>
<dbReference type="Pfam" id="PF02800">
    <property type="entry name" value="Gp_dh_C"/>
    <property type="match status" value="1"/>
</dbReference>
<dbReference type="Pfam" id="PF00044">
    <property type="entry name" value="Gp_dh_N"/>
    <property type="match status" value="1"/>
</dbReference>
<dbReference type="PIRSF" id="PIRSF000149">
    <property type="entry name" value="GAP_DH"/>
    <property type="match status" value="1"/>
</dbReference>
<dbReference type="PRINTS" id="PR00078">
    <property type="entry name" value="G3PDHDRGNASE"/>
</dbReference>
<dbReference type="SMART" id="SM00846">
    <property type="entry name" value="Gp_dh_N"/>
    <property type="match status" value="1"/>
</dbReference>
<dbReference type="SUPFAM" id="SSF55347">
    <property type="entry name" value="Glyceraldehyde-3-phosphate dehydrogenase-like, C-terminal domain"/>
    <property type="match status" value="1"/>
</dbReference>
<dbReference type="SUPFAM" id="SSF51735">
    <property type="entry name" value="NAD(P)-binding Rossmann-fold domains"/>
    <property type="match status" value="1"/>
</dbReference>
<dbReference type="PROSITE" id="PS00071">
    <property type="entry name" value="GAPDH"/>
    <property type="match status" value="1"/>
</dbReference>
<proteinExistence type="inferred from homology"/>
<comment type="catalytic activity">
    <reaction evidence="2">
        <text>D-glyceraldehyde 3-phosphate + phosphate + NAD(+) = (2R)-3-phospho-glyceroyl phosphate + NADH + H(+)</text>
        <dbReference type="Rhea" id="RHEA:10300"/>
        <dbReference type="ChEBI" id="CHEBI:15378"/>
        <dbReference type="ChEBI" id="CHEBI:43474"/>
        <dbReference type="ChEBI" id="CHEBI:57540"/>
        <dbReference type="ChEBI" id="CHEBI:57604"/>
        <dbReference type="ChEBI" id="CHEBI:57945"/>
        <dbReference type="ChEBI" id="CHEBI:59776"/>
        <dbReference type="EC" id="1.2.1.12"/>
    </reaction>
</comment>
<comment type="pathway">
    <text>Carbohydrate degradation; glycolysis; pyruvate from D-glyceraldehyde 3-phosphate: step 1/5.</text>
</comment>
<comment type="subunit">
    <text evidence="1">Homotetramer.</text>
</comment>
<comment type="subcellular location">
    <subcellularLocation>
        <location>Cytoplasm</location>
    </subcellularLocation>
</comment>
<comment type="similarity">
    <text evidence="3">Belongs to the glyceraldehyde-3-phosphate dehydrogenase family.</text>
</comment>
<gene>
    <name type="primary">GPD</name>
</gene>
<feature type="chain" id="PRO_0000145561" description="Glyceraldehyde-3-phosphate dehydrogenase">
    <location>
        <begin position="1"/>
        <end position="337"/>
    </location>
</feature>
<feature type="active site" description="Nucleophile" evidence="2">
    <location>
        <position position="150"/>
    </location>
</feature>
<feature type="binding site" evidence="1">
    <location>
        <begin position="11"/>
        <end position="12"/>
    </location>
    <ligand>
        <name>NAD(+)</name>
        <dbReference type="ChEBI" id="CHEBI:57540"/>
    </ligand>
</feature>
<feature type="binding site" evidence="1">
    <location>
        <position position="33"/>
    </location>
    <ligand>
        <name>NAD(+)</name>
        <dbReference type="ChEBI" id="CHEBI:57540"/>
    </ligand>
</feature>
<feature type="binding site" evidence="1">
    <location>
        <position position="78"/>
    </location>
    <ligand>
        <name>NAD(+)</name>
        <dbReference type="ChEBI" id="CHEBI:57540"/>
    </ligand>
</feature>
<feature type="binding site" evidence="1">
    <location>
        <begin position="149"/>
        <end position="151"/>
    </location>
    <ligand>
        <name>D-glyceraldehyde 3-phosphate</name>
        <dbReference type="ChEBI" id="CHEBI:59776"/>
    </ligand>
</feature>
<feature type="binding site" evidence="1">
    <location>
        <position position="180"/>
    </location>
    <ligand>
        <name>D-glyceraldehyde 3-phosphate</name>
        <dbReference type="ChEBI" id="CHEBI:59776"/>
    </ligand>
</feature>
<feature type="binding site" evidence="1">
    <location>
        <begin position="209"/>
        <end position="210"/>
    </location>
    <ligand>
        <name>D-glyceraldehyde 3-phosphate</name>
        <dbReference type="ChEBI" id="CHEBI:59776"/>
    </ligand>
</feature>
<feature type="binding site" evidence="1">
    <location>
        <position position="232"/>
    </location>
    <ligand>
        <name>D-glyceraldehyde 3-phosphate</name>
        <dbReference type="ChEBI" id="CHEBI:59776"/>
    </ligand>
</feature>
<feature type="binding site" evidence="1">
    <location>
        <position position="314"/>
    </location>
    <ligand>
        <name>NAD(+)</name>
        <dbReference type="ChEBI" id="CHEBI:57540"/>
    </ligand>
</feature>
<feature type="site" description="Activates thiol group during catalysis" evidence="1">
    <location>
        <position position="177"/>
    </location>
</feature>
<organism>
    <name type="scientific">Lyophyllum shimeji</name>
    <name type="common">Hon-shimeji</name>
    <name type="synonym">Tricholoma shimeji</name>
    <dbReference type="NCBI Taxonomy" id="47721"/>
    <lineage>
        <taxon>Eukaryota</taxon>
        <taxon>Fungi</taxon>
        <taxon>Dikarya</taxon>
        <taxon>Basidiomycota</taxon>
        <taxon>Agaricomycotina</taxon>
        <taxon>Agaricomycetes</taxon>
        <taxon>Agaricomycetidae</taxon>
        <taxon>Agaricales</taxon>
        <taxon>Tricholomatineae</taxon>
        <taxon>Lyophyllaceae</taxon>
        <taxon>Lyophyllum</taxon>
    </lineage>
</organism>
<keyword id="KW-0963">Cytoplasm</keyword>
<keyword id="KW-0324">Glycolysis</keyword>
<keyword id="KW-0520">NAD</keyword>
<keyword id="KW-0560">Oxidoreductase</keyword>
<accession>Q92243</accession>
<name>G3P_LYOSH</name>